<sequence>MSGPIGLEVQHPETEYRLKKVSEKFIESIHLMVNEPSVGLYRIQEHVRRSLPQLVDKKMELRSCQNQINGVCYDLDYSIKTVQSMQHIPHFTIIQECLRSAIASKKNLDAAKLERRSKKVDEGSGAQSADAVSEVSIETQDVEGFICPNCMQVLTSQDELLEHWQSQHETANDTRQGYNDDANNDQD</sequence>
<keyword id="KW-0458">Lysosome</keyword>
<keyword id="KW-0472">Membrane</keyword>
<keyword id="KW-1185">Reference proteome</keyword>
<feature type="chain" id="PRO_0000343674" description="BLOC-1-related complex subunit 8 homolog">
    <location>
        <begin position="1"/>
        <end position="187"/>
    </location>
</feature>
<feature type="region of interest" description="Disordered" evidence="2">
    <location>
        <begin position="165"/>
        <end position="187"/>
    </location>
</feature>
<name>BORC8_NEMVE</name>
<accession>A7SGF0</accession>
<reference key="1">
    <citation type="journal article" date="2007" name="Science">
        <title>Sea anemone genome reveals ancestral eumetazoan gene repertoire and genomic organization.</title>
        <authorList>
            <person name="Putnam N.H."/>
            <person name="Srivastava M."/>
            <person name="Hellsten U."/>
            <person name="Dirks B."/>
            <person name="Chapman J."/>
            <person name="Salamov A."/>
            <person name="Terry A."/>
            <person name="Shapiro H."/>
            <person name="Lindquist E."/>
            <person name="Kapitonov V.V."/>
            <person name="Jurka J."/>
            <person name="Genikhovich G."/>
            <person name="Grigoriev I.V."/>
            <person name="Lucas S.M."/>
            <person name="Steele R.E."/>
            <person name="Finnerty J.R."/>
            <person name="Technau U."/>
            <person name="Martindale M.Q."/>
            <person name="Rokhsar D.S."/>
        </authorList>
    </citation>
    <scope>NUCLEOTIDE SEQUENCE [LARGE SCALE GENOMIC DNA]</scope>
    <source>
        <strain>CH2 X CH6</strain>
    </source>
</reference>
<comment type="function">
    <text evidence="1">May participate in the coupling of lysosomes to microtubule plus-end-directed kinesin motor.</text>
</comment>
<comment type="subcellular location">
    <subcellularLocation>
        <location evidence="1">Lysosome membrane</location>
    </subcellularLocation>
</comment>
<comment type="similarity">
    <text evidence="3">Belongs to the BORCS8 family.</text>
</comment>
<organism>
    <name type="scientific">Nematostella vectensis</name>
    <name type="common">Starlet sea anemone</name>
    <dbReference type="NCBI Taxonomy" id="45351"/>
    <lineage>
        <taxon>Eukaryota</taxon>
        <taxon>Metazoa</taxon>
        <taxon>Cnidaria</taxon>
        <taxon>Anthozoa</taxon>
        <taxon>Hexacorallia</taxon>
        <taxon>Actiniaria</taxon>
        <taxon>Edwardsiidae</taxon>
        <taxon>Nematostella</taxon>
    </lineage>
</organism>
<protein>
    <recommendedName>
        <fullName evidence="3">BLOC-1-related complex subunit 8 homolog</fullName>
    </recommendedName>
</protein>
<dbReference type="EMBL" id="DS469651">
    <property type="protein sequence ID" value="EDO37257.1"/>
    <property type="molecule type" value="Genomic_DNA"/>
</dbReference>
<dbReference type="RefSeq" id="XP_001629320.1">
    <property type="nucleotide sequence ID" value="XM_001629270.1"/>
</dbReference>
<dbReference type="SMR" id="A7SGF0"/>
<dbReference type="STRING" id="45351.A7SGF0"/>
<dbReference type="EnsemblMetazoa" id="EDO37257">
    <property type="protein sequence ID" value="EDO37257"/>
    <property type="gene ID" value="NEMVEDRAFT_v1g233178"/>
</dbReference>
<dbReference type="KEGG" id="nve:5508752"/>
<dbReference type="eggNOG" id="KOG4523">
    <property type="taxonomic scope" value="Eukaryota"/>
</dbReference>
<dbReference type="HOGENOM" id="CLU_1449342_0_0_1"/>
<dbReference type="InParanoid" id="A7SGF0"/>
<dbReference type="OMA" id="QHETAND"/>
<dbReference type="OrthoDB" id="10044187at2759"/>
<dbReference type="PhylomeDB" id="A7SGF0"/>
<dbReference type="Proteomes" id="UP000001593">
    <property type="component" value="Unassembled WGS sequence"/>
</dbReference>
<dbReference type="GO" id="GO:0099078">
    <property type="term" value="C:BORC complex"/>
    <property type="evidence" value="ECO:0000318"/>
    <property type="project" value="GO_Central"/>
</dbReference>
<dbReference type="GO" id="GO:0005765">
    <property type="term" value="C:lysosomal membrane"/>
    <property type="evidence" value="ECO:0007669"/>
    <property type="project" value="UniProtKB-SubCell"/>
</dbReference>
<dbReference type="InterPro" id="IPR019320">
    <property type="entry name" value="BORCS8"/>
</dbReference>
<dbReference type="InterPro" id="IPR013087">
    <property type="entry name" value="Znf_C2H2_type"/>
</dbReference>
<dbReference type="PANTHER" id="PTHR21146:SF0">
    <property type="entry name" value="BLOC-1-RELATED COMPLEX SUBUNIT 8"/>
    <property type="match status" value="1"/>
</dbReference>
<dbReference type="PANTHER" id="PTHR21146">
    <property type="entry name" value="MEF2B PROTEIN"/>
    <property type="match status" value="1"/>
</dbReference>
<dbReference type="Pfam" id="PF10167">
    <property type="entry name" value="BORCS8"/>
    <property type="match status" value="1"/>
</dbReference>
<gene>
    <name evidence="4" type="ORF">v1g233178</name>
</gene>
<evidence type="ECO:0000250" key="1">
    <source>
        <dbReference type="UniProtKB" id="Q96FH0"/>
    </source>
</evidence>
<evidence type="ECO:0000256" key="2">
    <source>
        <dbReference type="SAM" id="MobiDB-lite"/>
    </source>
</evidence>
<evidence type="ECO:0000305" key="3"/>
<evidence type="ECO:0000312" key="4">
    <source>
        <dbReference type="EMBL" id="EDO37257.1"/>
    </source>
</evidence>
<proteinExistence type="inferred from homology"/>